<proteinExistence type="inferred from homology"/>
<comment type="subcellular location">
    <subcellularLocation>
        <location evidence="1">Mitochondrion outer membrane</location>
        <topology evidence="1">Peripheral membrane protein</topology>
    </subcellularLocation>
</comment>
<comment type="similarity">
    <text evidence="2">Belongs to the FMP52 family.</text>
</comment>
<protein>
    <recommendedName>
        <fullName>Protein FMP52, mitochondrial</fullName>
    </recommendedName>
</protein>
<feature type="transit peptide" description="Mitochondrion">
    <location>
        <begin position="1"/>
        <end status="unknown"/>
    </location>
</feature>
<feature type="chain" id="PRO_0000301818" description="Protein FMP52, mitochondrial">
    <location>
        <begin status="unknown"/>
        <end position="233"/>
    </location>
</feature>
<keyword id="KW-0472">Membrane</keyword>
<keyword id="KW-0496">Mitochondrion</keyword>
<keyword id="KW-1000">Mitochondrion outer membrane</keyword>
<keyword id="KW-1185">Reference proteome</keyword>
<keyword id="KW-0809">Transit peptide</keyword>
<dbReference type="EMBL" id="CR380954">
    <property type="protein sequence ID" value="CAG60156.1"/>
    <property type="molecule type" value="Genomic_DNA"/>
</dbReference>
<dbReference type="RefSeq" id="XP_447223.1">
    <property type="nucleotide sequence ID" value="XM_447223.1"/>
</dbReference>
<dbReference type="SMR" id="Q6FRC1"/>
<dbReference type="FunCoup" id="Q6FRC1">
    <property type="interactions" value="115"/>
</dbReference>
<dbReference type="STRING" id="284593.Q6FRC1"/>
<dbReference type="EnsemblFungi" id="CAGL0H09768g-T">
    <property type="protein sequence ID" value="CAGL0H09768g-T-p1"/>
    <property type="gene ID" value="CAGL0H09768g"/>
</dbReference>
<dbReference type="KEGG" id="cgr:2888564"/>
<dbReference type="CGD" id="CAL0131582">
    <property type="gene designation" value="CAGL0H09768g"/>
</dbReference>
<dbReference type="VEuPathDB" id="FungiDB:B1J91_H09768g"/>
<dbReference type="VEuPathDB" id="FungiDB:CAGL0H09768g"/>
<dbReference type="eggNOG" id="KOG4039">
    <property type="taxonomic scope" value="Eukaryota"/>
</dbReference>
<dbReference type="HOGENOM" id="CLU_071330_3_0_1"/>
<dbReference type="InParanoid" id="Q6FRC1"/>
<dbReference type="OMA" id="CIENAKA"/>
<dbReference type="Proteomes" id="UP000002428">
    <property type="component" value="Chromosome H"/>
</dbReference>
<dbReference type="GO" id="GO:0005741">
    <property type="term" value="C:mitochondrial outer membrane"/>
    <property type="evidence" value="ECO:0007669"/>
    <property type="project" value="UniProtKB-SubCell"/>
</dbReference>
<dbReference type="GO" id="GO:0051170">
    <property type="term" value="P:import into nucleus"/>
    <property type="evidence" value="ECO:0007669"/>
    <property type="project" value="TreeGrafter"/>
</dbReference>
<dbReference type="FunFam" id="3.40.50.720:FF:000366">
    <property type="entry name" value="Protein FMP52, mitochondrial"/>
    <property type="match status" value="1"/>
</dbReference>
<dbReference type="Gene3D" id="3.40.50.720">
    <property type="entry name" value="NAD(P)-binding Rossmann-like Domain"/>
    <property type="match status" value="1"/>
</dbReference>
<dbReference type="InterPro" id="IPR014843">
    <property type="entry name" value="Him1/Fmp52"/>
</dbReference>
<dbReference type="InterPro" id="IPR036291">
    <property type="entry name" value="NAD(P)-bd_dom_sf"/>
</dbReference>
<dbReference type="PANTHER" id="PTHR14097">
    <property type="entry name" value="OXIDOREDUCTASE HTATIP2"/>
    <property type="match status" value="1"/>
</dbReference>
<dbReference type="PANTHER" id="PTHR14097:SF7">
    <property type="entry name" value="OXIDOREDUCTASE HTATIP2"/>
    <property type="match status" value="1"/>
</dbReference>
<dbReference type="Pfam" id="PF08732">
    <property type="entry name" value="HIM1"/>
    <property type="match status" value="1"/>
</dbReference>
<dbReference type="SUPFAM" id="SSF51735">
    <property type="entry name" value="NAD(P)-binding Rossmann-fold domains"/>
    <property type="match status" value="1"/>
</dbReference>
<accession>Q6FRC1</accession>
<name>FMP52_CANGA</name>
<gene>
    <name type="primary">FMP52</name>
    <name type="ordered locus">CAGL0H09768g</name>
</gene>
<sequence length="233" mass="25627">MSKQTAVVLGATGLCGEHLLKSAVASQAFEKVYSISRRSLPYVADCEQIVDKDSSSWASLLPKENFKFLFTSLATTRAAAGGFDKQYQIDHDLNLELAKASKANGCETIVLVSSTGANKNSWMPYLRMKGEIEEDIIALNFKHTIILRPSALLGDRRDHHKGFGNDLFVKIGNCFYRSRLQSIMGYPVQGEEVGIAGVQAALQEAEKNTESPTVRYVGSSEILELVDNFKNNS</sequence>
<reference key="1">
    <citation type="journal article" date="2004" name="Nature">
        <title>Genome evolution in yeasts.</title>
        <authorList>
            <person name="Dujon B."/>
            <person name="Sherman D."/>
            <person name="Fischer G."/>
            <person name="Durrens P."/>
            <person name="Casaregola S."/>
            <person name="Lafontaine I."/>
            <person name="de Montigny J."/>
            <person name="Marck C."/>
            <person name="Neuveglise C."/>
            <person name="Talla E."/>
            <person name="Goffard N."/>
            <person name="Frangeul L."/>
            <person name="Aigle M."/>
            <person name="Anthouard V."/>
            <person name="Babour A."/>
            <person name="Barbe V."/>
            <person name="Barnay S."/>
            <person name="Blanchin S."/>
            <person name="Beckerich J.-M."/>
            <person name="Beyne E."/>
            <person name="Bleykasten C."/>
            <person name="Boisrame A."/>
            <person name="Boyer J."/>
            <person name="Cattolico L."/>
            <person name="Confanioleri F."/>
            <person name="de Daruvar A."/>
            <person name="Despons L."/>
            <person name="Fabre E."/>
            <person name="Fairhead C."/>
            <person name="Ferry-Dumazet H."/>
            <person name="Groppi A."/>
            <person name="Hantraye F."/>
            <person name="Hennequin C."/>
            <person name="Jauniaux N."/>
            <person name="Joyet P."/>
            <person name="Kachouri R."/>
            <person name="Kerrest A."/>
            <person name="Koszul R."/>
            <person name="Lemaire M."/>
            <person name="Lesur I."/>
            <person name="Ma L."/>
            <person name="Muller H."/>
            <person name="Nicaud J.-M."/>
            <person name="Nikolski M."/>
            <person name="Oztas S."/>
            <person name="Ozier-Kalogeropoulos O."/>
            <person name="Pellenz S."/>
            <person name="Potier S."/>
            <person name="Richard G.-F."/>
            <person name="Straub M.-L."/>
            <person name="Suleau A."/>
            <person name="Swennen D."/>
            <person name="Tekaia F."/>
            <person name="Wesolowski-Louvel M."/>
            <person name="Westhof E."/>
            <person name="Wirth B."/>
            <person name="Zeniou-Meyer M."/>
            <person name="Zivanovic Y."/>
            <person name="Bolotin-Fukuhara M."/>
            <person name="Thierry A."/>
            <person name="Bouchier C."/>
            <person name="Caudron B."/>
            <person name="Scarpelli C."/>
            <person name="Gaillardin C."/>
            <person name="Weissenbach J."/>
            <person name="Wincker P."/>
            <person name="Souciet J.-L."/>
        </authorList>
    </citation>
    <scope>NUCLEOTIDE SEQUENCE [LARGE SCALE GENOMIC DNA]</scope>
    <source>
        <strain>ATCC 2001 / BCRC 20586 / JCM 3761 / NBRC 0622 / NRRL Y-65 / CBS 138</strain>
    </source>
</reference>
<evidence type="ECO:0000250" key="1"/>
<evidence type="ECO:0000305" key="2"/>
<organism>
    <name type="scientific">Candida glabrata (strain ATCC 2001 / BCRC 20586 / JCM 3761 / NBRC 0622 / NRRL Y-65 / CBS 138)</name>
    <name type="common">Yeast</name>
    <name type="synonym">Nakaseomyces glabratus</name>
    <dbReference type="NCBI Taxonomy" id="284593"/>
    <lineage>
        <taxon>Eukaryota</taxon>
        <taxon>Fungi</taxon>
        <taxon>Dikarya</taxon>
        <taxon>Ascomycota</taxon>
        <taxon>Saccharomycotina</taxon>
        <taxon>Saccharomycetes</taxon>
        <taxon>Saccharomycetales</taxon>
        <taxon>Saccharomycetaceae</taxon>
        <taxon>Nakaseomyces</taxon>
    </lineage>
</organism>